<organism>
    <name type="scientific">Streptococcus pyogenes serotype M4 (strain MGAS10750)</name>
    <dbReference type="NCBI Taxonomy" id="370554"/>
    <lineage>
        <taxon>Bacteria</taxon>
        <taxon>Bacillati</taxon>
        <taxon>Bacillota</taxon>
        <taxon>Bacilli</taxon>
        <taxon>Lactobacillales</taxon>
        <taxon>Streptococcaceae</taxon>
        <taxon>Streptococcus</taxon>
    </lineage>
</organism>
<name>RL19_STRPF</name>
<accession>Q1J7J0</accession>
<sequence>MNPLIQSLTEGQLRSDIPNFRPGDTVRVHAKVVEGTRERIQIFEGVVISRKGQGISEMYTVRKISGGIGVERTFPIHTPRVDKIEVIRHGKVRRAKLYYLRALQGKAARIKEIRR</sequence>
<dbReference type="EMBL" id="CP000262">
    <property type="protein sequence ID" value="ABF37584.1"/>
    <property type="molecule type" value="Genomic_DNA"/>
</dbReference>
<dbReference type="SMR" id="Q1J7J0"/>
<dbReference type="KEGG" id="spi:MGAS10750_Spy0634"/>
<dbReference type="HOGENOM" id="CLU_103507_2_1_9"/>
<dbReference type="Proteomes" id="UP000002434">
    <property type="component" value="Chromosome"/>
</dbReference>
<dbReference type="GO" id="GO:0022625">
    <property type="term" value="C:cytosolic large ribosomal subunit"/>
    <property type="evidence" value="ECO:0007669"/>
    <property type="project" value="TreeGrafter"/>
</dbReference>
<dbReference type="GO" id="GO:0003735">
    <property type="term" value="F:structural constituent of ribosome"/>
    <property type="evidence" value="ECO:0007669"/>
    <property type="project" value="InterPro"/>
</dbReference>
<dbReference type="GO" id="GO:0006412">
    <property type="term" value="P:translation"/>
    <property type="evidence" value="ECO:0007669"/>
    <property type="project" value="UniProtKB-UniRule"/>
</dbReference>
<dbReference type="FunFam" id="2.30.30.790:FF:000001">
    <property type="entry name" value="50S ribosomal protein L19"/>
    <property type="match status" value="1"/>
</dbReference>
<dbReference type="Gene3D" id="2.30.30.790">
    <property type="match status" value="1"/>
</dbReference>
<dbReference type="HAMAP" id="MF_00402">
    <property type="entry name" value="Ribosomal_bL19"/>
    <property type="match status" value="1"/>
</dbReference>
<dbReference type="InterPro" id="IPR001857">
    <property type="entry name" value="Ribosomal_bL19"/>
</dbReference>
<dbReference type="InterPro" id="IPR018257">
    <property type="entry name" value="Ribosomal_bL19_CS"/>
</dbReference>
<dbReference type="InterPro" id="IPR038657">
    <property type="entry name" value="Ribosomal_bL19_sf"/>
</dbReference>
<dbReference type="InterPro" id="IPR008991">
    <property type="entry name" value="Translation_prot_SH3-like_sf"/>
</dbReference>
<dbReference type="NCBIfam" id="TIGR01024">
    <property type="entry name" value="rplS_bact"/>
    <property type="match status" value="1"/>
</dbReference>
<dbReference type="PANTHER" id="PTHR15680:SF9">
    <property type="entry name" value="LARGE RIBOSOMAL SUBUNIT PROTEIN BL19M"/>
    <property type="match status" value="1"/>
</dbReference>
<dbReference type="PANTHER" id="PTHR15680">
    <property type="entry name" value="RIBOSOMAL PROTEIN L19"/>
    <property type="match status" value="1"/>
</dbReference>
<dbReference type="Pfam" id="PF01245">
    <property type="entry name" value="Ribosomal_L19"/>
    <property type="match status" value="1"/>
</dbReference>
<dbReference type="PIRSF" id="PIRSF002191">
    <property type="entry name" value="Ribosomal_L19"/>
    <property type="match status" value="1"/>
</dbReference>
<dbReference type="PRINTS" id="PR00061">
    <property type="entry name" value="RIBOSOMALL19"/>
</dbReference>
<dbReference type="SUPFAM" id="SSF50104">
    <property type="entry name" value="Translation proteins SH3-like domain"/>
    <property type="match status" value="1"/>
</dbReference>
<dbReference type="PROSITE" id="PS01015">
    <property type="entry name" value="RIBOSOMAL_L19"/>
    <property type="match status" value="1"/>
</dbReference>
<comment type="function">
    <text evidence="1">This protein is located at the 30S-50S ribosomal subunit interface and may play a role in the structure and function of the aminoacyl-tRNA binding site.</text>
</comment>
<comment type="similarity">
    <text evidence="1">Belongs to the bacterial ribosomal protein bL19 family.</text>
</comment>
<reference key="1">
    <citation type="journal article" date="2006" name="Proc. Natl. Acad. Sci. U.S.A.">
        <title>Molecular genetic anatomy of inter- and intraserotype variation in the human bacterial pathogen group A Streptococcus.</title>
        <authorList>
            <person name="Beres S.B."/>
            <person name="Richter E.W."/>
            <person name="Nagiec M.J."/>
            <person name="Sumby P."/>
            <person name="Porcella S.F."/>
            <person name="DeLeo F.R."/>
            <person name="Musser J.M."/>
        </authorList>
    </citation>
    <scope>NUCLEOTIDE SEQUENCE [LARGE SCALE GENOMIC DNA]</scope>
    <source>
        <strain>MGAS10750</strain>
    </source>
</reference>
<feature type="chain" id="PRO_0000252551" description="Large ribosomal subunit protein bL19">
    <location>
        <begin position="1"/>
        <end position="115"/>
    </location>
</feature>
<gene>
    <name evidence="1" type="primary">rplS</name>
    <name type="ordered locus">MGAS10750_Spy0634</name>
</gene>
<protein>
    <recommendedName>
        <fullName evidence="1">Large ribosomal subunit protein bL19</fullName>
    </recommendedName>
    <alternativeName>
        <fullName evidence="2">50S ribosomal protein L19</fullName>
    </alternativeName>
</protein>
<evidence type="ECO:0000255" key="1">
    <source>
        <dbReference type="HAMAP-Rule" id="MF_00402"/>
    </source>
</evidence>
<evidence type="ECO:0000305" key="2"/>
<proteinExistence type="inferred from homology"/>
<keyword id="KW-0687">Ribonucleoprotein</keyword>
<keyword id="KW-0689">Ribosomal protein</keyword>